<proteinExistence type="inferred from homology"/>
<protein>
    <recommendedName>
        <fullName evidence="1">RNA pyrophosphohydrolase</fullName>
        <ecNumber evidence="1">3.6.1.-</ecNumber>
    </recommendedName>
    <alternativeName>
        <fullName evidence="1">(Di)nucleoside polyphosphate hydrolase</fullName>
    </alternativeName>
</protein>
<accession>B8H5H3</accession>
<gene>
    <name evidence="1" type="primary">rppH</name>
    <name evidence="1" type="synonym">nudH</name>
    <name type="ordered locus">CCNA_03553</name>
</gene>
<dbReference type="EC" id="3.6.1.-" evidence="1"/>
<dbReference type="EMBL" id="CP001340">
    <property type="protein sequence ID" value="ACL97018.1"/>
    <property type="molecule type" value="Genomic_DNA"/>
</dbReference>
<dbReference type="RefSeq" id="WP_010921269.1">
    <property type="nucleotide sequence ID" value="NC_011916.1"/>
</dbReference>
<dbReference type="RefSeq" id="YP_002518926.1">
    <property type="nucleotide sequence ID" value="NC_011916.1"/>
</dbReference>
<dbReference type="SMR" id="B8H5H3"/>
<dbReference type="GeneID" id="7332551"/>
<dbReference type="KEGG" id="ccs:CCNA_03553"/>
<dbReference type="PATRIC" id="fig|565050.3.peg.3468"/>
<dbReference type="HOGENOM" id="CLU_087195_3_0_5"/>
<dbReference type="OrthoDB" id="9816040at2"/>
<dbReference type="PhylomeDB" id="B8H5H3"/>
<dbReference type="Proteomes" id="UP000001364">
    <property type="component" value="Chromosome"/>
</dbReference>
<dbReference type="GO" id="GO:0034432">
    <property type="term" value="F:bis(5'-adenosyl)-pentaphosphatase activity"/>
    <property type="evidence" value="ECO:0007669"/>
    <property type="project" value="TreeGrafter"/>
</dbReference>
<dbReference type="GO" id="GO:0008893">
    <property type="term" value="F:guanosine-3',5'-bis(diphosphate) 3'-diphosphatase activity"/>
    <property type="evidence" value="ECO:0007669"/>
    <property type="project" value="TreeGrafter"/>
</dbReference>
<dbReference type="GO" id="GO:0006753">
    <property type="term" value="P:nucleoside phosphate metabolic process"/>
    <property type="evidence" value="ECO:0007669"/>
    <property type="project" value="TreeGrafter"/>
</dbReference>
<dbReference type="GO" id="GO:0019693">
    <property type="term" value="P:ribose phosphate metabolic process"/>
    <property type="evidence" value="ECO:0007669"/>
    <property type="project" value="TreeGrafter"/>
</dbReference>
<dbReference type="CDD" id="cd03671">
    <property type="entry name" value="NUDIX_Ap4A_hydrolase_plant_like"/>
    <property type="match status" value="1"/>
</dbReference>
<dbReference type="Gene3D" id="3.90.79.10">
    <property type="entry name" value="Nucleoside Triphosphate Pyrophosphohydrolase"/>
    <property type="match status" value="1"/>
</dbReference>
<dbReference type="HAMAP" id="MF_00298">
    <property type="entry name" value="Nudix_RppH"/>
    <property type="match status" value="1"/>
</dbReference>
<dbReference type="InterPro" id="IPR020476">
    <property type="entry name" value="Nudix_hydrolase"/>
</dbReference>
<dbReference type="InterPro" id="IPR015797">
    <property type="entry name" value="NUDIX_hydrolase-like_dom_sf"/>
</dbReference>
<dbReference type="InterPro" id="IPR020084">
    <property type="entry name" value="NUDIX_hydrolase_CS"/>
</dbReference>
<dbReference type="InterPro" id="IPR000086">
    <property type="entry name" value="NUDIX_hydrolase_dom"/>
</dbReference>
<dbReference type="InterPro" id="IPR022927">
    <property type="entry name" value="RppH"/>
</dbReference>
<dbReference type="NCBIfam" id="NF001938">
    <property type="entry name" value="PRK00714.1-5"/>
    <property type="match status" value="1"/>
</dbReference>
<dbReference type="PANTHER" id="PTHR11839:SF22">
    <property type="entry name" value="NUDIX HYDROLASE 26, CHLOROPLASTIC"/>
    <property type="match status" value="1"/>
</dbReference>
<dbReference type="PANTHER" id="PTHR11839">
    <property type="entry name" value="UDP/ADP-SUGAR PYROPHOSPHATASE"/>
    <property type="match status" value="1"/>
</dbReference>
<dbReference type="Pfam" id="PF00293">
    <property type="entry name" value="NUDIX"/>
    <property type="match status" value="1"/>
</dbReference>
<dbReference type="PRINTS" id="PR00502">
    <property type="entry name" value="NUDIXFAMILY"/>
</dbReference>
<dbReference type="SUPFAM" id="SSF55811">
    <property type="entry name" value="Nudix"/>
    <property type="match status" value="1"/>
</dbReference>
<dbReference type="PROSITE" id="PS51462">
    <property type="entry name" value="NUDIX"/>
    <property type="match status" value="1"/>
</dbReference>
<dbReference type="PROSITE" id="PS00893">
    <property type="entry name" value="NUDIX_BOX"/>
    <property type="match status" value="1"/>
</dbReference>
<sequence>MTELDHPQHRPNVGVVLFHPDGRVWLGRRHRQAPPYNWQFPQGGVDEGEDLEVAARRELAEETGVTSVELLGRTEGWITYDFPPEVMANPKHARGWRGQKQVWFAYRFVGEESEIDLEADEHIEFDAWRWGRLDETPELIVPFKRGVYEAVVAAFQGFARGDSPVRRREGEN</sequence>
<feature type="chain" id="PRO_1000191840" description="RNA pyrophosphohydrolase">
    <location>
        <begin position="1"/>
        <end position="172"/>
    </location>
</feature>
<feature type="domain" description="Nudix hydrolase" evidence="1">
    <location>
        <begin position="8"/>
        <end position="153"/>
    </location>
</feature>
<feature type="short sequence motif" description="Nudix box">
    <location>
        <begin position="43"/>
        <end position="64"/>
    </location>
</feature>
<name>RPPH_CAUVN</name>
<comment type="function">
    <text evidence="1">Accelerates the degradation of transcripts by removing pyrophosphate from the 5'-end of triphosphorylated RNA, leading to a more labile monophosphorylated state that can stimulate subsequent ribonuclease cleavage.</text>
</comment>
<comment type="cofactor">
    <cofactor evidence="1">
        <name>a divalent metal cation</name>
        <dbReference type="ChEBI" id="CHEBI:60240"/>
    </cofactor>
</comment>
<comment type="similarity">
    <text evidence="1">Belongs to the Nudix hydrolase family. RppH subfamily.</text>
</comment>
<evidence type="ECO:0000255" key="1">
    <source>
        <dbReference type="HAMAP-Rule" id="MF_00298"/>
    </source>
</evidence>
<keyword id="KW-0378">Hydrolase</keyword>
<keyword id="KW-1185">Reference proteome</keyword>
<reference key="1">
    <citation type="journal article" date="2010" name="J. Bacteriol.">
        <title>The genetic basis of laboratory adaptation in Caulobacter crescentus.</title>
        <authorList>
            <person name="Marks M.E."/>
            <person name="Castro-Rojas C.M."/>
            <person name="Teiling C."/>
            <person name="Du L."/>
            <person name="Kapatral V."/>
            <person name="Walunas T.L."/>
            <person name="Crosson S."/>
        </authorList>
    </citation>
    <scope>NUCLEOTIDE SEQUENCE [LARGE SCALE GENOMIC DNA]</scope>
    <source>
        <strain>NA1000 / CB15N</strain>
    </source>
</reference>
<organism>
    <name type="scientific">Caulobacter vibrioides (strain NA1000 / CB15N)</name>
    <name type="common">Caulobacter crescentus</name>
    <dbReference type="NCBI Taxonomy" id="565050"/>
    <lineage>
        <taxon>Bacteria</taxon>
        <taxon>Pseudomonadati</taxon>
        <taxon>Pseudomonadota</taxon>
        <taxon>Alphaproteobacteria</taxon>
        <taxon>Caulobacterales</taxon>
        <taxon>Caulobacteraceae</taxon>
        <taxon>Caulobacter</taxon>
    </lineage>
</organism>